<protein>
    <recommendedName>
        <fullName>Golgi apparatus membrane protein tvp38</fullName>
    </recommendedName>
</protein>
<comment type="function">
    <text>Golgi membrane protein involved in vesicular trafficking and spindle migration.</text>
</comment>
<comment type="subcellular location">
    <subcellularLocation>
        <location>Golgi apparatus membrane</location>
        <topology>Multi-pass membrane protein</topology>
    </subcellularLocation>
</comment>
<comment type="domain">
    <text evidence="1">The VTT domain was previously called the SNARE-assoc domain. As there is no evidence that this domain associates with SNARE proteins, it was renamed as VMP1, TMEM41, and TVP38 (VTT) domain.</text>
</comment>
<comment type="similarity">
    <text evidence="4">Belongs to the TVP38/TMEM64 family.</text>
</comment>
<gene>
    <name type="primary">tvp38</name>
    <name type="ORF">SS1G_04221</name>
</gene>
<sequence length="393" mass="42761">MPADYSSTARALALPISPLESPPSSPIQHAERPPWSRRISSGVRRAYNSASPYSSQPTTSFKDQILRKADKLQRKCITAWQNLSTLQKCLAIVAAILNIVLVALFLVYQHQIFASLAPFAERWRDLPGGWMILWAMTFVAAFPPLIGYSSTITIAGFVYGVPKGWAIVATSTVAGSTCSFLASRTILSTYVHRLVGKDKRFEALALTLKHDGIKILCMIRLCPLPYSLSNAAVATFPTVHPLNYALATALVTPKLFIHVFIGSRLGSLAGNEGMDTSTKMINYASIVIGGGLGATVGYIIYQRTMARAKELEIEELEAANGDVAPGRRVAAEYSDANNDDAALMNDDDISLWDNTDEPARYTDFVDEDEANVFASGDLDEEADIGGRGKMTRT</sequence>
<keyword id="KW-0325">Glycoprotein</keyword>
<keyword id="KW-0333">Golgi apparatus</keyword>
<keyword id="KW-0472">Membrane</keyword>
<keyword id="KW-1185">Reference proteome</keyword>
<keyword id="KW-0812">Transmembrane</keyword>
<keyword id="KW-1133">Transmembrane helix</keyword>
<dbReference type="EMBL" id="CH476625">
    <property type="protein sequence ID" value="EDO01746.1"/>
    <property type="molecule type" value="Genomic_DNA"/>
</dbReference>
<dbReference type="RefSeq" id="XP_001594414.1">
    <property type="nucleotide sequence ID" value="XM_001594364.1"/>
</dbReference>
<dbReference type="FunCoup" id="A7EFY0">
    <property type="interactions" value="109"/>
</dbReference>
<dbReference type="STRING" id="665079.A7EFY0"/>
<dbReference type="GlyCosmos" id="A7EFY0">
    <property type="glycosylation" value="1 site, No reported glycans"/>
</dbReference>
<dbReference type="EnsemblFungi" id="EDO01746">
    <property type="protein sequence ID" value="EDO01746"/>
    <property type="gene ID" value="SS1G_04221"/>
</dbReference>
<dbReference type="GeneID" id="5490759"/>
<dbReference type="KEGG" id="ssl:SS1G_04221"/>
<dbReference type="VEuPathDB" id="FungiDB:sscle_02g018490"/>
<dbReference type="eggNOG" id="KOG3140">
    <property type="taxonomic scope" value="Eukaryota"/>
</dbReference>
<dbReference type="HOGENOM" id="CLU_041954_0_0_1"/>
<dbReference type="InParanoid" id="A7EFY0"/>
<dbReference type="OMA" id="KWQALET"/>
<dbReference type="OrthoDB" id="166803at2759"/>
<dbReference type="Proteomes" id="UP000001312">
    <property type="component" value="Unassembled WGS sequence"/>
</dbReference>
<dbReference type="GO" id="GO:0000139">
    <property type="term" value="C:Golgi membrane"/>
    <property type="evidence" value="ECO:0000318"/>
    <property type="project" value="GO_Central"/>
</dbReference>
<dbReference type="GO" id="GO:0000022">
    <property type="term" value="P:mitotic spindle elongation"/>
    <property type="evidence" value="ECO:0000318"/>
    <property type="project" value="GO_Central"/>
</dbReference>
<dbReference type="GO" id="GO:0016192">
    <property type="term" value="P:vesicle-mediated transport"/>
    <property type="evidence" value="ECO:0000318"/>
    <property type="project" value="GO_Central"/>
</dbReference>
<dbReference type="InterPro" id="IPR051076">
    <property type="entry name" value="Golgi_membrane_TVP38/TMEM64"/>
</dbReference>
<dbReference type="InterPro" id="IPR032816">
    <property type="entry name" value="VTT_dom"/>
</dbReference>
<dbReference type="PANTHER" id="PTHR47549:SF1">
    <property type="entry name" value="GOLGI APPARATUS MEMBRANE PROTEIN TVP38"/>
    <property type="match status" value="1"/>
</dbReference>
<dbReference type="PANTHER" id="PTHR47549">
    <property type="entry name" value="GOLGI APPARATUS MEMBRANE PROTEIN TVP38-RELATED"/>
    <property type="match status" value="1"/>
</dbReference>
<dbReference type="Pfam" id="PF09335">
    <property type="entry name" value="VTT_dom"/>
    <property type="match status" value="1"/>
</dbReference>
<name>TVP38_SCLS1</name>
<feature type="chain" id="PRO_0000343075" description="Golgi apparatus membrane protein tvp38">
    <location>
        <begin position="1"/>
        <end position="393"/>
    </location>
</feature>
<feature type="topological domain" description="Lumenal" evidence="2">
    <location>
        <begin position="1"/>
        <end position="88"/>
    </location>
</feature>
<feature type="transmembrane region" description="Helical" evidence="2">
    <location>
        <begin position="89"/>
        <end position="109"/>
    </location>
</feature>
<feature type="topological domain" description="Cytoplasmic" evidence="2">
    <location>
        <begin position="110"/>
        <end position="125"/>
    </location>
</feature>
<feature type="transmembrane region" description="Helical" evidence="2">
    <location>
        <begin position="126"/>
        <end position="146"/>
    </location>
</feature>
<feature type="topological domain" description="Lumenal" evidence="2">
    <location>
        <begin position="147"/>
        <end position="164"/>
    </location>
</feature>
<feature type="transmembrane region" description="Helical" evidence="2">
    <location>
        <begin position="165"/>
        <end position="187"/>
    </location>
</feature>
<feature type="topological domain" description="Cytoplasmic" evidence="2">
    <location>
        <begin position="188"/>
        <end position="241"/>
    </location>
</feature>
<feature type="transmembrane region" description="Helical" evidence="2">
    <location>
        <begin position="242"/>
        <end position="262"/>
    </location>
</feature>
<feature type="topological domain" description="Lumenal" evidence="2">
    <location>
        <begin position="263"/>
        <end position="279"/>
    </location>
</feature>
<feature type="transmembrane region" description="Helical" evidence="2">
    <location>
        <begin position="280"/>
        <end position="300"/>
    </location>
</feature>
<feature type="topological domain" description="Cytoplasmic" evidence="2">
    <location>
        <begin position="301"/>
        <end position="393"/>
    </location>
</feature>
<feature type="region of interest" description="VTT domain" evidence="1">
    <location>
        <begin position="156"/>
        <end position="265"/>
    </location>
</feature>
<feature type="region of interest" description="Disordered" evidence="3">
    <location>
        <begin position="374"/>
        <end position="393"/>
    </location>
</feature>
<feature type="glycosylation site" description="N-linked (GlcNAc...) asparagine" evidence="2">
    <location>
        <position position="82"/>
    </location>
</feature>
<evidence type="ECO:0000250" key="1">
    <source>
        <dbReference type="UniProtKB" id="P36164"/>
    </source>
</evidence>
<evidence type="ECO:0000255" key="2"/>
<evidence type="ECO:0000256" key="3">
    <source>
        <dbReference type="SAM" id="MobiDB-lite"/>
    </source>
</evidence>
<evidence type="ECO:0000305" key="4"/>
<proteinExistence type="inferred from homology"/>
<reference key="1">
    <citation type="journal article" date="2011" name="PLoS Genet.">
        <title>Genomic analysis of the necrotrophic fungal pathogens Sclerotinia sclerotiorum and Botrytis cinerea.</title>
        <authorList>
            <person name="Amselem J."/>
            <person name="Cuomo C.A."/>
            <person name="van Kan J.A.L."/>
            <person name="Viaud M."/>
            <person name="Benito E.P."/>
            <person name="Couloux A."/>
            <person name="Coutinho P.M."/>
            <person name="de Vries R.P."/>
            <person name="Dyer P.S."/>
            <person name="Fillinger S."/>
            <person name="Fournier E."/>
            <person name="Gout L."/>
            <person name="Hahn M."/>
            <person name="Kohn L."/>
            <person name="Lapalu N."/>
            <person name="Plummer K.M."/>
            <person name="Pradier J.-M."/>
            <person name="Quevillon E."/>
            <person name="Sharon A."/>
            <person name="Simon A."/>
            <person name="ten Have A."/>
            <person name="Tudzynski B."/>
            <person name="Tudzynski P."/>
            <person name="Wincker P."/>
            <person name="Andrew M."/>
            <person name="Anthouard V."/>
            <person name="Beever R.E."/>
            <person name="Beffa R."/>
            <person name="Benoit I."/>
            <person name="Bouzid O."/>
            <person name="Brault B."/>
            <person name="Chen Z."/>
            <person name="Choquer M."/>
            <person name="Collemare J."/>
            <person name="Cotton P."/>
            <person name="Danchin E.G."/>
            <person name="Da Silva C."/>
            <person name="Gautier A."/>
            <person name="Giraud C."/>
            <person name="Giraud T."/>
            <person name="Gonzalez C."/>
            <person name="Grossetete S."/>
            <person name="Gueldener U."/>
            <person name="Henrissat B."/>
            <person name="Howlett B.J."/>
            <person name="Kodira C."/>
            <person name="Kretschmer M."/>
            <person name="Lappartient A."/>
            <person name="Leroch M."/>
            <person name="Levis C."/>
            <person name="Mauceli E."/>
            <person name="Neuveglise C."/>
            <person name="Oeser B."/>
            <person name="Pearson M."/>
            <person name="Poulain J."/>
            <person name="Poussereau N."/>
            <person name="Quesneville H."/>
            <person name="Rascle C."/>
            <person name="Schumacher J."/>
            <person name="Segurens B."/>
            <person name="Sexton A."/>
            <person name="Silva E."/>
            <person name="Sirven C."/>
            <person name="Soanes D.M."/>
            <person name="Talbot N.J."/>
            <person name="Templeton M."/>
            <person name="Yandava C."/>
            <person name="Yarden O."/>
            <person name="Zeng Q."/>
            <person name="Rollins J.A."/>
            <person name="Lebrun M.-H."/>
            <person name="Dickman M."/>
        </authorList>
    </citation>
    <scope>NUCLEOTIDE SEQUENCE [LARGE SCALE GENOMIC DNA]</scope>
    <source>
        <strain>ATCC 18683 / 1980 / Ss-1</strain>
    </source>
</reference>
<accession>A7EFY0</accession>
<organism>
    <name type="scientific">Sclerotinia sclerotiorum (strain ATCC 18683 / 1980 / Ss-1)</name>
    <name type="common">White mold</name>
    <name type="synonym">Whetzelinia sclerotiorum</name>
    <dbReference type="NCBI Taxonomy" id="665079"/>
    <lineage>
        <taxon>Eukaryota</taxon>
        <taxon>Fungi</taxon>
        <taxon>Dikarya</taxon>
        <taxon>Ascomycota</taxon>
        <taxon>Pezizomycotina</taxon>
        <taxon>Leotiomycetes</taxon>
        <taxon>Helotiales</taxon>
        <taxon>Sclerotiniaceae</taxon>
        <taxon>Sclerotinia</taxon>
    </lineage>
</organism>